<proteinExistence type="evidence at protein level"/>
<reference key="1">
    <citation type="journal article" date="2002" name="Mol. Endocrinol.">
        <title>The activating enzyme of NEDD8 inhibits steroid receptor function.</title>
        <authorList>
            <person name="Fan M."/>
            <person name="Long X."/>
            <person name="Bailey J.A."/>
            <person name="Reed C.A."/>
            <person name="Osborne E."/>
            <person name="Gize E.A."/>
            <person name="Kirk E.A."/>
            <person name="Bigsby R.M."/>
            <person name="Nephew K.P."/>
        </authorList>
    </citation>
    <scope>NUCLEOTIDE SEQUENCE [MRNA]</scope>
    <scope>FUNCTION</scope>
    <scope>INTERACTION WITH ESR1 AND ESR2</scope>
    <scope>TISSUE SPECIFICITY</scope>
    <source>
        <strain>Sprague-Dawley</strain>
        <tissue>Uterus</tissue>
    </source>
</reference>
<reference key="2">
    <citation type="journal article" date="2004" name="Genome Res.">
        <title>The status, quality, and expansion of the NIH full-length cDNA project: the Mammalian Gene Collection (MGC).</title>
        <authorList>
            <consortium name="The MGC Project Team"/>
        </authorList>
    </citation>
    <scope>NUCLEOTIDE SEQUENCE [LARGE SCALE MRNA]</scope>
    <source>
        <tissue>Lung</tissue>
    </source>
</reference>
<organism>
    <name type="scientific">Rattus norvegicus</name>
    <name type="common">Rat</name>
    <dbReference type="NCBI Taxonomy" id="10116"/>
    <lineage>
        <taxon>Eukaryota</taxon>
        <taxon>Metazoa</taxon>
        <taxon>Chordata</taxon>
        <taxon>Craniata</taxon>
        <taxon>Vertebrata</taxon>
        <taxon>Euteleostomi</taxon>
        <taxon>Mammalia</taxon>
        <taxon>Eutheria</taxon>
        <taxon>Euarchontoglires</taxon>
        <taxon>Glires</taxon>
        <taxon>Rodentia</taxon>
        <taxon>Myomorpha</taxon>
        <taxon>Muroidea</taxon>
        <taxon>Muridae</taxon>
        <taxon>Murinae</taxon>
        <taxon>Rattus</taxon>
    </lineage>
</organism>
<keyword id="KW-0007">Acetylation</keyword>
<keyword id="KW-0067">ATP-binding</keyword>
<keyword id="KW-0131">Cell cycle</keyword>
<keyword id="KW-0436">Ligase</keyword>
<keyword id="KW-0547">Nucleotide-binding</keyword>
<keyword id="KW-1185">Reference proteome</keyword>
<keyword id="KW-0833">Ubl conjugation pathway</keyword>
<evidence type="ECO:0000250" key="1"/>
<evidence type="ECO:0000250" key="2">
    <source>
        <dbReference type="UniProtKB" id="Q8TBC4"/>
    </source>
</evidence>
<evidence type="ECO:0000255" key="3">
    <source>
        <dbReference type="PROSITE-ProRule" id="PRU10132"/>
    </source>
</evidence>
<evidence type="ECO:0000269" key="4">
    <source>
    </source>
</evidence>
<evidence type="ECO:0000305" key="5"/>
<feature type="initiator methionine" description="Removed" evidence="2">
    <location>
        <position position="1"/>
    </location>
</feature>
<feature type="chain" id="PRO_0000194944" description="NEDD8-activating enzyme E1 catalytic subunit">
    <location>
        <begin position="2"/>
        <end position="462"/>
    </location>
</feature>
<feature type="region of interest" description="Interaction with UBE2M N-terminus" evidence="1">
    <location>
        <begin position="53"/>
        <end position="70"/>
    </location>
</feature>
<feature type="region of interest" description="Interaction with UBE2M N-terminus" evidence="1">
    <location>
        <begin position="157"/>
        <end position="161"/>
    </location>
</feature>
<feature type="region of interest" description="Interaction with UBE2M N-terminus" evidence="1">
    <location>
        <begin position="192"/>
        <end position="217"/>
    </location>
</feature>
<feature type="region of interest" description="Interaction with NEDD8" evidence="1">
    <location>
        <begin position="227"/>
        <end position="229"/>
    </location>
</feature>
<feature type="region of interest" description="Interaction with NAE1" evidence="1">
    <location>
        <begin position="242"/>
        <end position="248"/>
    </location>
</feature>
<feature type="region of interest" description="Interaction with NAE1" evidence="1">
    <location>
        <begin position="292"/>
        <end position="295"/>
    </location>
</feature>
<feature type="region of interest" description="Interaction with UBE2M N-terminus" evidence="1">
    <location>
        <begin position="331"/>
        <end position="338"/>
    </location>
</feature>
<feature type="region of interest" description="Interaction with NEDD8" evidence="1">
    <location>
        <begin position="352"/>
        <end position="357"/>
    </location>
</feature>
<feature type="region of interest" description="Interaction with UBE2M core domain" evidence="1">
    <location>
        <begin position="368"/>
        <end position="462"/>
    </location>
</feature>
<feature type="active site" description="Glycyl thioester intermediate" evidence="3">
    <location>
        <position position="237"/>
    </location>
</feature>
<feature type="binding site" evidence="1">
    <location>
        <begin position="100"/>
        <end position="124"/>
    </location>
    <ligand>
        <name>ATP</name>
        <dbReference type="ChEBI" id="CHEBI:30616"/>
    </ligand>
</feature>
<feature type="binding site" evidence="1">
    <location>
        <begin position="148"/>
        <end position="171"/>
    </location>
    <ligand>
        <name>ATP</name>
        <dbReference type="ChEBI" id="CHEBI:30616"/>
    </ligand>
</feature>
<feature type="site" description="Determines specificity for NEDD8" evidence="1">
    <location>
        <position position="211"/>
    </location>
</feature>
<feature type="modified residue" description="N-acetylalanine" evidence="2">
    <location>
        <position position="2"/>
    </location>
</feature>
<comment type="function">
    <text evidence="4">Catalytic subunit of the dimeric UBA3-NAE1 E1 enzyme. E1 activates NEDD8 by first adenylating its C-terminal glycine residue with ATP, thereafter linking this residue to the side chain of the catalytic cysteine, yielding a NEDD8-UBA3 thioester and free AMP. E1 finally transfers NEDD8 to the catalytic cysteine of UBE2M. Down-regulates steroid receptor activity. Necessary for cell cycle progression.</text>
</comment>
<comment type="catalytic activity">
    <reaction evidence="2">
        <text>ATP + [NEDD8 protein] + [E1 NEDD8-activating enzyme]-L-cysteine = AMP + diphosphate + [E1 NEDD8-activating enzyme]-S-[NEDD8 protein]-yl-L-cysteine.</text>
        <dbReference type="EC" id="6.2.1.64"/>
    </reaction>
</comment>
<comment type="activity regulation">
    <text evidence="1">Binding of TP53BP2 to the regulatory subunit NAE1 decreases activity.</text>
</comment>
<comment type="pathway">
    <text>Protein modification; protein neddylation.</text>
</comment>
<comment type="subunit">
    <text evidence="1">Heterodimer of UBA3 and NAE1. Interacts with NEDD8, UBE2F and UBE2M (By similarity). Binds ESR1 and ESR2 with bound steroid ligand. Interacts with TBATA (By similarity).</text>
</comment>
<comment type="tissue specificity">
    <text evidence="4">Ubiquitously expressed.</text>
</comment>
<comment type="miscellaneous">
    <text evidence="1">Arg-211 acts as a selectivity gate, preventing misactivation of ubiquitin by this NEDD8-specific E1 complex.</text>
</comment>
<comment type="similarity">
    <text evidence="5">Belongs to the ubiquitin-activating E1 family. UBA3 subfamily.</text>
</comment>
<name>UBA3_RAT</name>
<accession>Q99MI7</accession>
<sequence>MADGEEPEKKRRRIEELLAEKMAVDGGCGDTGDWEGRWNHVKKFLERSGPFTHPDFEPSTESLQFLLDTCKVLVIGAGGLGCELLKNLALSGFRQIHVIDMDTIDVSNLNRQFLFRPKDVGRPKAEVAAEFLNDRVPNCNVVPHFNKIQDFNDTFYRQFHIIVCGLDSIIARRWINGMLISLLNYEDGVLDPSSIVPLIDGGTEGFKGNARVILPGMTACIECTLELYPPQVNFPMCTIASMPRLPEHCIEYVRMLQWPKEQPFGDGVPLDGDDPEHIQWIFQKSVERASQYNIRGVTYRLTQGVVKRIIPAVASTNAVIAAVCATEVFKIATSAYIPLNNYLVFNDVDGLYTYTFEAERKENCPACSQLPQNIQFSPSAKLQEVLDYLTNSASLQMKSPAITATLEGKNRTLYLQSVTSIEERTRPNLSKTLKELGLVDGQELAVADVTTPQTVLFKLHFT</sequence>
<gene>
    <name type="primary">Uba3</name>
    <name type="synonym">Ube1c</name>
</gene>
<protein>
    <recommendedName>
        <fullName>NEDD8-activating enzyme E1 catalytic subunit</fullName>
        <ecNumber evidence="2">6.2.1.64</ecNumber>
    </recommendedName>
    <alternativeName>
        <fullName>NEDD8-activating enzyme E1C</fullName>
    </alternativeName>
    <alternativeName>
        <fullName>Ubiquitin-activating enzyme E1C</fullName>
    </alternativeName>
    <alternativeName>
        <fullName>Ubiquitin-like modifier-activating enzyme 3</fullName>
        <shortName>Ubiquitin-activating enzyme 3</shortName>
    </alternativeName>
</protein>
<dbReference type="EC" id="6.2.1.64" evidence="2"/>
<dbReference type="EMBL" id="AF336829">
    <property type="protein sequence ID" value="AAK21298.1"/>
    <property type="molecule type" value="mRNA"/>
</dbReference>
<dbReference type="EMBL" id="BC081743">
    <property type="protein sequence ID" value="AAH81743.1"/>
    <property type="molecule type" value="mRNA"/>
</dbReference>
<dbReference type="RefSeq" id="NP_476553.1">
    <property type="nucleotide sequence ID" value="NM_057205.2"/>
</dbReference>
<dbReference type="BMRB" id="Q99MI7"/>
<dbReference type="SMR" id="Q99MI7"/>
<dbReference type="BioGRID" id="250766">
    <property type="interactions" value="2"/>
</dbReference>
<dbReference type="FunCoup" id="Q99MI7">
    <property type="interactions" value="4274"/>
</dbReference>
<dbReference type="STRING" id="10116.ENSRNOP00000008893"/>
<dbReference type="iPTMnet" id="Q99MI7"/>
<dbReference type="PhosphoSitePlus" id="Q99MI7"/>
<dbReference type="jPOST" id="Q99MI7"/>
<dbReference type="PaxDb" id="10116-ENSRNOP00000008893"/>
<dbReference type="GeneID" id="117553"/>
<dbReference type="KEGG" id="rno:117553"/>
<dbReference type="UCSC" id="RGD:621084">
    <property type="organism name" value="rat"/>
</dbReference>
<dbReference type="AGR" id="RGD:621084"/>
<dbReference type="CTD" id="9039"/>
<dbReference type="RGD" id="621084">
    <property type="gene designation" value="Uba3"/>
</dbReference>
<dbReference type="VEuPathDB" id="HostDB:ENSRNOG00000006221"/>
<dbReference type="eggNOG" id="KOG2015">
    <property type="taxonomic scope" value="Eukaryota"/>
</dbReference>
<dbReference type="HOGENOM" id="CLU_013325_13_1_1"/>
<dbReference type="InParanoid" id="Q99MI7"/>
<dbReference type="OrthoDB" id="4001at9989"/>
<dbReference type="PhylomeDB" id="Q99MI7"/>
<dbReference type="TreeFam" id="TF300499"/>
<dbReference type="Reactome" id="R-RNO-5607761">
    <property type="pathway name" value="Dectin-1 mediated noncanonical NF-kB signaling"/>
</dbReference>
<dbReference type="Reactome" id="R-RNO-5676590">
    <property type="pathway name" value="NIK--&gt;noncanonical NF-kB signaling"/>
</dbReference>
<dbReference type="Reactome" id="R-RNO-8951664">
    <property type="pathway name" value="Neddylation"/>
</dbReference>
<dbReference type="Reactome" id="R-RNO-983168">
    <property type="pathway name" value="Antigen processing: Ubiquitination &amp; Proteasome degradation"/>
</dbReference>
<dbReference type="UniPathway" id="UPA00885"/>
<dbReference type="PRO" id="PR:Q99MI7"/>
<dbReference type="Proteomes" id="UP000002494">
    <property type="component" value="Chromosome 4"/>
</dbReference>
<dbReference type="Bgee" id="ENSRNOG00000006221">
    <property type="expression patterns" value="Expressed in duodenum and 20 other cell types or tissues"/>
</dbReference>
<dbReference type="GO" id="GO:0005737">
    <property type="term" value="C:cytoplasm"/>
    <property type="evidence" value="ECO:0000318"/>
    <property type="project" value="GO_Central"/>
</dbReference>
<dbReference type="GO" id="GO:0005634">
    <property type="term" value="C:nucleus"/>
    <property type="evidence" value="ECO:0000318"/>
    <property type="project" value="GO_Central"/>
</dbReference>
<dbReference type="GO" id="GO:0032991">
    <property type="term" value="C:protein-containing complex"/>
    <property type="evidence" value="ECO:0000266"/>
    <property type="project" value="RGD"/>
</dbReference>
<dbReference type="GO" id="GO:0005524">
    <property type="term" value="F:ATP binding"/>
    <property type="evidence" value="ECO:0007669"/>
    <property type="project" value="UniProtKB-KW"/>
</dbReference>
<dbReference type="GO" id="GO:0042802">
    <property type="term" value="F:identical protein binding"/>
    <property type="evidence" value="ECO:0000266"/>
    <property type="project" value="RGD"/>
</dbReference>
<dbReference type="GO" id="GO:0019781">
    <property type="term" value="F:NEDD8 activating enzyme activity"/>
    <property type="evidence" value="ECO:0000314"/>
    <property type="project" value="RGD"/>
</dbReference>
<dbReference type="GO" id="GO:0016922">
    <property type="term" value="F:nuclear receptor binding"/>
    <property type="evidence" value="ECO:0000353"/>
    <property type="project" value="RGD"/>
</dbReference>
<dbReference type="GO" id="GO:0046982">
    <property type="term" value="F:protein heterodimerization activity"/>
    <property type="evidence" value="ECO:0000266"/>
    <property type="project" value="RGD"/>
</dbReference>
<dbReference type="GO" id="GO:0044877">
    <property type="term" value="F:protein-containing complex binding"/>
    <property type="evidence" value="ECO:0000315"/>
    <property type="project" value="RGD"/>
</dbReference>
<dbReference type="GO" id="GO:0007113">
    <property type="term" value="P:endomitotic cell cycle"/>
    <property type="evidence" value="ECO:0000266"/>
    <property type="project" value="RGD"/>
</dbReference>
<dbReference type="GO" id="GO:0000278">
    <property type="term" value="P:mitotic cell cycle"/>
    <property type="evidence" value="ECO:0000266"/>
    <property type="project" value="RGD"/>
</dbReference>
<dbReference type="GO" id="GO:0045892">
    <property type="term" value="P:negative regulation of DNA-templated transcription"/>
    <property type="evidence" value="ECO:0000314"/>
    <property type="project" value="RGD"/>
</dbReference>
<dbReference type="GO" id="GO:0045116">
    <property type="term" value="P:protein neddylation"/>
    <property type="evidence" value="ECO:0000266"/>
    <property type="project" value="RGD"/>
</dbReference>
<dbReference type="GO" id="GO:0051726">
    <property type="term" value="P:regulation of cell cycle"/>
    <property type="evidence" value="ECO:0000266"/>
    <property type="project" value="RGD"/>
</dbReference>
<dbReference type="CDD" id="cd01488">
    <property type="entry name" value="Uba3_RUB"/>
    <property type="match status" value="1"/>
</dbReference>
<dbReference type="FunFam" id="1.10.10.520:FF:000001">
    <property type="entry name" value="NEDD8-activating enzyme E1 catalytic subunit"/>
    <property type="match status" value="1"/>
</dbReference>
<dbReference type="FunFam" id="3.40.50.720:FF:000106">
    <property type="entry name" value="NEDD8-activating enzyme E1 catalytic subunit, putative"/>
    <property type="match status" value="1"/>
</dbReference>
<dbReference type="FunFam" id="3.10.290.20:FF:000001">
    <property type="entry name" value="NEDD8-activating enzyme E1 catalytic subunit, variant"/>
    <property type="match status" value="1"/>
</dbReference>
<dbReference type="Gene3D" id="3.40.50.720">
    <property type="entry name" value="NAD(P)-binding Rossmann-like Domain"/>
    <property type="match status" value="1"/>
</dbReference>
<dbReference type="Gene3D" id="1.10.10.520">
    <property type="entry name" value="Ubiquitin activating enzymes (Uba3). Chain: B, domain 2"/>
    <property type="match status" value="1"/>
</dbReference>
<dbReference type="Gene3D" id="3.10.290.20">
    <property type="entry name" value="Ubiquitin-like 2 activating enzyme e1b. Chain: B, domain 3"/>
    <property type="match status" value="1"/>
</dbReference>
<dbReference type="InterPro" id="IPR014929">
    <property type="entry name" value="E2-binding"/>
</dbReference>
<dbReference type="InterPro" id="IPR045886">
    <property type="entry name" value="ThiF/MoeB/HesA"/>
</dbReference>
<dbReference type="InterPro" id="IPR000594">
    <property type="entry name" value="ThiF_NAD_FAD-bd"/>
</dbReference>
<dbReference type="InterPro" id="IPR023318">
    <property type="entry name" value="Ub_act_enz_dom_a_sf"/>
</dbReference>
<dbReference type="InterPro" id="IPR030468">
    <property type="entry name" value="Uba3_N"/>
</dbReference>
<dbReference type="InterPro" id="IPR035985">
    <property type="entry name" value="Ubiquitin-activating_enz"/>
</dbReference>
<dbReference type="InterPro" id="IPR033127">
    <property type="entry name" value="UBQ-activ_enz_E1_Cys_AS"/>
</dbReference>
<dbReference type="PANTHER" id="PTHR10953:SF6">
    <property type="entry name" value="NEDD8-ACTIVATING ENZYME E1 CATALYTIC SUBUNIT"/>
    <property type="match status" value="1"/>
</dbReference>
<dbReference type="PANTHER" id="PTHR10953">
    <property type="entry name" value="UBIQUITIN-ACTIVATING ENZYME E1"/>
    <property type="match status" value="1"/>
</dbReference>
<dbReference type="Pfam" id="PF08825">
    <property type="entry name" value="E2_bind"/>
    <property type="match status" value="1"/>
</dbReference>
<dbReference type="Pfam" id="PF00899">
    <property type="entry name" value="ThiF"/>
    <property type="match status" value="1"/>
</dbReference>
<dbReference type="SMART" id="SM01181">
    <property type="entry name" value="E2_bind"/>
    <property type="match status" value="1"/>
</dbReference>
<dbReference type="SUPFAM" id="SSF69572">
    <property type="entry name" value="Activating enzymes of the ubiquitin-like proteins"/>
    <property type="match status" value="1"/>
</dbReference>
<dbReference type="PROSITE" id="PS00865">
    <property type="entry name" value="UBIQUITIN_ACTIVAT_2"/>
    <property type="match status" value="1"/>
</dbReference>